<sequence>MKSIFIIIFILYVFQVNSQTIYPIDPSGKCEQYIGDTPSSPCSKFLNNLDSIYVSSNATQQNAMKKLDEYFGILGAIGTSGCKSDSLTYKTLCSIYLPGCESFTNNQTNITIAIPKRICYNTCNNVTTKCGVPKFYFSCDQIEPVSGLPMFPLNYSEFNLTNYDVGNPNYTVQCYGPLSDNTMVNLDSSYCPPPLFYHNSTDHDADYDRGYLFVSETSNCVVPNPVPLYTNEQWDQLYNLSNTLAVLSTFGSLYLLVTFIILNPKVTSFDRMYGFFNGSVFMMSLSGVILFIAGGPRALIKDGGARISVFEDPLCSSTGFIFQLFAINAILFWAYMGFDLWWRVKYITKPLNIQKYYVPIAFTISFIFSVIPLATKNYRMVRGNIHCWVHKAVLQNTLFFGPLGLTLTISTGFIGLVIYEIYKIVKATGRGGIMKLEIKPILNIVLIYFSFVYIFAFNFHNDNNSKNTYGSIDEFFQCTLESDDPSKCTVGGPSIGSLGYFIYCIRIYGIYCFFLQGLNERAFKIWKRSIVFNNRFILFIKVKLFSMDNNSPSESGNSSTTAGTSTTINNSNINKKNNNSKPTLSTMDSNAFSKNNDSDSDFDDYDPYHKKQNDIEIGSVNIK</sequence>
<dbReference type="EMBL" id="AAFI02000011">
    <property type="protein sequence ID" value="EAL70450.1"/>
    <property type="status" value="ALT_SEQ"/>
    <property type="molecule type" value="Genomic_DNA"/>
</dbReference>
<dbReference type="EMBL" id="AAFI02000009">
    <property type="protein sequence ID" value="EAL71155.1"/>
    <property type="status" value="ALT_SEQ"/>
    <property type="molecule type" value="Genomic_DNA"/>
</dbReference>
<dbReference type="RefSeq" id="XP_644375.1">
    <property type="nucleotide sequence ID" value="XM_639283.1"/>
</dbReference>
<dbReference type="RefSeq" id="XP_645038.1">
    <property type="nucleotide sequence ID" value="XM_639946.1"/>
</dbReference>
<dbReference type="FunCoup" id="Q556N7">
    <property type="interactions" value="20"/>
</dbReference>
<dbReference type="GlyCosmos" id="Q556N7">
    <property type="glycosylation" value="9 sites, No reported glycans"/>
</dbReference>
<dbReference type="GlyGen" id="Q556N7">
    <property type="glycosylation" value="9 sites"/>
</dbReference>
<dbReference type="PaxDb" id="44689-DDB0232048"/>
<dbReference type="EnsemblProtists" id="EAL70450">
    <property type="protein sequence ID" value="EAL70450"/>
    <property type="gene ID" value="DDB_G0274033"/>
</dbReference>
<dbReference type="EnsemblProtists" id="EAL71155">
    <property type="protein sequence ID" value="EAL71155"/>
    <property type="gene ID" value="DDB_G0273035"/>
</dbReference>
<dbReference type="GeneID" id="8618715"/>
<dbReference type="GeneID" id="8619261"/>
<dbReference type="KEGG" id="ddi:DDB_G0273035"/>
<dbReference type="KEGG" id="ddi:DDB_G0274033"/>
<dbReference type="dictyBase" id="DDB_G0273035">
    <property type="gene designation" value="fslM-1"/>
</dbReference>
<dbReference type="dictyBase" id="DDB_G0274033">
    <property type="gene designation" value="fslM-2"/>
</dbReference>
<dbReference type="VEuPathDB" id="AmoebaDB:DDB_G0274033"/>
<dbReference type="eggNOG" id="ENOG502RF31">
    <property type="taxonomic scope" value="Eukaryota"/>
</dbReference>
<dbReference type="InParanoid" id="Q556N7"/>
<dbReference type="PRO" id="PR:Q556N7"/>
<dbReference type="Proteomes" id="UP000002195">
    <property type="component" value="Chromosome 2"/>
</dbReference>
<dbReference type="GO" id="GO:0016020">
    <property type="term" value="C:membrane"/>
    <property type="evidence" value="ECO:0007669"/>
    <property type="project" value="UniProtKB-SubCell"/>
</dbReference>
<dbReference type="Gene3D" id="1.10.2000.10">
    <property type="entry name" value="Frizzled cysteine-rich domain"/>
    <property type="match status" value="1"/>
</dbReference>
<dbReference type="Gene3D" id="1.20.1070.10">
    <property type="entry name" value="Rhodopsin 7-helix transmembrane proteins"/>
    <property type="match status" value="1"/>
</dbReference>
<dbReference type="InterPro" id="IPR036790">
    <property type="entry name" value="Frizzled_dom_sf"/>
</dbReference>
<dbReference type="InterPro" id="IPR050949">
    <property type="entry name" value="GPCR_Fz/Smo-like"/>
</dbReference>
<dbReference type="PANTHER" id="PTHR31787:SF10">
    <property type="entry name" value="FRIZZLED AND SMOOTHENED-LIKE PROTEIN L-RELATED"/>
    <property type="match status" value="1"/>
</dbReference>
<dbReference type="PANTHER" id="PTHR31787">
    <property type="entry name" value="G-PROTEIN-COUPLED RECEPTOR GPCR FAMILY PROTEIN"/>
    <property type="match status" value="1"/>
</dbReference>
<evidence type="ECO:0000250" key="1"/>
<evidence type="ECO:0000255" key="2"/>
<evidence type="ECO:0000256" key="3">
    <source>
        <dbReference type="SAM" id="MobiDB-lite"/>
    </source>
</evidence>
<evidence type="ECO:0000305" key="4"/>
<gene>
    <name type="primary">fslM-1</name>
    <name type="ORF">DDB_G0273035</name>
</gene>
<gene>
    <name type="primary">fslM-2</name>
    <name type="ORF">DDB_G0274033</name>
</gene>
<reference key="1">
    <citation type="journal article" date="2002" name="Nature">
        <title>Sequence and analysis of chromosome 2 of Dictyostelium discoideum.</title>
        <authorList>
            <person name="Gloeckner G."/>
            <person name="Eichinger L."/>
            <person name="Szafranski K."/>
            <person name="Pachebat J.A."/>
            <person name="Bankier A.T."/>
            <person name="Dear P.H."/>
            <person name="Lehmann R."/>
            <person name="Baumgart C."/>
            <person name="Parra G."/>
            <person name="Abril J.F."/>
            <person name="Guigo R."/>
            <person name="Kumpf K."/>
            <person name="Tunggal B."/>
            <person name="Cox E.C."/>
            <person name="Quail M.A."/>
            <person name="Platzer M."/>
            <person name="Rosenthal A."/>
            <person name="Noegel A.A."/>
        </authorList>
    </citation>
    <scope>NUCLEOTIDE SEQUENCE [LARGE SCALE GENOMIC DNA]</scope>
    <source>
        <strain>AX4</strain>
    </source>
</reference>
<reference key="2">
    <citation type="journal article" date="2005" name="Nature">
        <title>The genome of the social amoeba Dictyostelium discoideum.</title>
        <authorList>
            <person name="Eichinger L."/>
            <person name="Pachebat J.A."/>
            <person name="Gloeckner G."/>
            <person name="Rajandream M.A."/>
            <person name="Sucgang R."/>
            <person name="Berriman M."/>
            <person name="Song J."/>
            <person name="Olsen R."/>
            <person name="Szafranski K."/>
            <person name="Xu Q."/>
            <person name="Tunggal B."/>
            <person name="Kummerfeld S."/>
            <person name="Madera M."/>
            <person name="Konfortov B.A."/>
            <person name="Rivero F."/>
            <person name="Bankier A.T."/>
            <person name="Lehmann R."/>
            <person name="Hamlin N."/>
            <person name="Davies R."/>
            <person name="Gaudet P."/>
            <person name="Fey P."/>
            <person name="Pilcher K."/>
            <person name="Chen G."/>
            <person name="Saunders D."/>
            <person name="Sodergren E.J."/>
            <person name="Davis P."/>
            <person name="Kerhornou A."/>
            <person name="Nie X."/>
            <person name="Hall N."/>
            <person name="Anjard C."/>
            <person name="Hemphill L."/>
            <person name="Bason N."/>
            <person name="Farbrother P."/>
            <person name="Desany B."/>
            <person name="Just E."/>
            <person name="Morio T."/>
            <person name="Rost R."/>
            <person name="Churcher C.M."/>
            <person name="Cooper J."/>
            <person name="Haydock S."/>
            <person name="van Driessche N."/>
            <person name="Cronin A."/>
            <person name="Goodhead I."/>
            <person name="Muzny D.M."/>
            <person name="Mourier T."/>
            <person name="Pain A."/>
            <person name="Lu M."/>
            <person name="Harper D."/>
            <person name="Lindsay R."/>
            <person name="Hauser H."/>
            <person name="James K.D."/>
            <person name="Quiles M."/>
            <person name="Madan Babu M."/>
            <person name="Saito T."/>
            <person name="Buchrieser C."/>
            <person name="Wardroper A."/>
            <person name="Felder M."/>
            <person name="Thangavelu M."/>
            <person name="Johnson D."/>
            <person name="Knights A."/>
            <person name="Loulseged H."/>
            <person name="Mungall K.L."/>
            <person name="Oliver K."/>
            <person name="Price C."/>
            <person name="Quail M.A."/>
            <person name="Urushihara H."/>
            <person name="Hernandez J."/>
            <person name="Rabbinowitsch E."/>
            <person name="Steffen D."/>
            <person name="Sanders M."/>
            <person name="Ma J."/>
            <person name="Kohara Y."/>
            <person name="Sharp S."/>
            <person name="Simmonds M.N."/>
            <person name="Spiegler S."/>
            <person name="Tivey A."/>
            <person name="Sugano S."/>
            <person name="White B."/>
            <person name="Walker D."/>
            <person name="Woodward J.R."/>
            <person name="Winckler T."/>
            <person name="Tanaka Y."/>
            <person name="Shaulsky G."/>
            <person name="Schleicher M."/>
            <person name="Weinstock G.M."/>
            <person name="Rosenthal A."/>
            <person name="Cox E.C."/>
            <person name="Chisholm R.L."/>
            <person name="Gibbs R.A."/>
            <person name="Loomis W.F."/>
            <person name="Platzer M."/>
            <person name="Kay R.R."/>
            <person name="Williams J.G."/>
            <person name="Dear P.H."/>
            <person name="Noegel A.A."/>
            <person name="Barrell B.G."/>
            <person name="Kuspa A."/>
        </authorList>
    </citation>
    <scope>NUCLEOTIDE SEQUENCE [LARGE SCALE GENOMIC DNA]</scope>
    <source>
        <strain>AX4</strain>
    </source>
</reference>
<reference key="3">
    <citation type="journal article" date="2006" name="Eur. J. Cell Biol.">
        <title>The Dictyostelium repertoire of seven transmembrane domain receptors.</title>
        <authorList>
            <person name="Prabhu Y."/>
            <person name="Eichinger L."/>
        </authorList>
    </citation>
    <scope>NOMENCLATURE</scope>
</reference>
<keyword id="KW-1015">Disulfide bond</keyword>
<keyword id="KW-0325">Glycoprotein</keyword>
<keyword id="KW-0472">Membrane</keyword>
<keyword id="KW-0675">Receptor</keyword>
<keyword id="KW-1185">Reference proteome</keyword>
<keyword id="KW-0732">Signal</keyword>
<keyword id="KW-0812">Transmembrane</keyword>
<keyword id="KW-1133">Transmembrane helix</keyword>
<name>FSLM_DICDI</name>
<organism>
    <name type="scientific">Dictyostelium discoideum</name>
    <name type="common">Social amoeba</name>
    <dbReference type="NCBI Taxonomy" id="44689"/>
    <lineage>
        <taxon>Eukaryota</taxon>
        <taxon>Amoebozoa</taxon>
        <taxon>Evosea</taxon>
        <taxon>Eumycetozoa</taxon>
        <taxon>Dictyostelia</taxon>
        <taxon>Dictyosteliales</taxon>
        <taxon>Dictyosteliaceae</taxon>
        <taxon>Dictyostelium</taxon>
    </lineage>
</organism>
<comment type="subcellular location">
    <subcellularLocation>
        <location evidence="4">Membrane</location>
        <topology evidence="4">Multi-pass membrane protein</topology>
    </subcellularLocation>
</comment>
<comment type="similarity">
    <text evidence="4">Belongs to the G-protein coupled receptor Fz/Smo family.</text>
</comment>
<comment type="caution">
    <text evidence="4">The gene for this protein is duplicated in strains AX3 and AX4. These strains contain a duplication of a segment of 750 kb of chromosome 2 compared to the corresponding sequence in strain AX2.</text>
</comment>
<comment type="sequence caution" evidence="4">
    <conflict type="erroneous gene model prediction">
        <sequence resource="EMBL-CDS" id="EAL70450"/>
    </conflict>
</comment>
<comment type="sequence caution" evidence="4">
    <conflict type="erroneous gene model prediction">
        <sequence resource="EMBL-CDS" id="EAL71155"/>
    </conflict>
</comment>
<proteinExistence type="inferred from homology"/>
<accession>Q556N7</accession>
<accession>Q86K15</accession>
<protein>
    <recommendedName>
        <fullName>Frizzled and smoothened-like protein M</fullName>
    </recommendedName>
</protein>
<feature type="signal peptide" evidence="2">
    <location>
        <begin position="1"/>
        <end position="18"/>
    </location>
</feature>
<feature type="chain" id="PRO_0000371374" description="Frizzled and smoothened-like protein M">
    <location>
        <begin position="19"/>
        <end position="623"/>
    </location>
</feature>
<feature type="topological domain" description="Extracellular" evidence="2">
    <location>
        <begin position="19"/>
        <end position="243"/>
    </location>
</feature>
<feature type="transmembrane region" description="Helical" evidence="2">
    <location>
        <begin position="244"/>
        <end position="264"/>
    </location>
</feature>
<feature type="topological domain" description="Cytoplasmic" evidence="2">
    <location>
        <begin position="265"/>
        <end position="273"/>
    </location>
</feature>
<feature type="transmembrane region" description="Helical" evidence="2">
    <location>
        <begin position="274"/>
        <end position="294"/>
    </location>
</feature>
<feature type="topological domain" description="Extracellular" evidence="2">
    <location>
        <begin position="295"/>
        <end position="317"/>
    </location>
</feature>
<feature type="transmembrane region" description="Helical" evidence="2">
    <location>
        <begin position="318"/>
        <end position="338"/>
    </location>
</feature>
<feature type="topological domain" description="Cytoplasmic" evidence="2">
    <location>
        <begin position="339"/>
        <end position="354"/>
    </location>
</feature>
<feature type="transmembrane region" description="Helical" evidence="2">
    <location>
        <begin position="355"/>
        <end position="375"/>
    </location>
</feature>
<feature type="topological domain" description="Extracellular" evidence="2">
    <location>
        <begin position="376"/>
        <end position="397"/>
    </location>
</feature>
<feature type="transmembrane region" description="Helical" evidence="2">
    <location>
        <begin position="398"/>
        <end position="418"/>
    </location>
</feature>
<feature type="topological domain" description="Cytoplasmic" evidence="2">
    <location>
        <begin position="419"/>
        <end position="439"/>
    </location>
</feature>
<feature type="transmembrane region" description="Helical" evidence="2">
    <location>
        <begin position="440"/>
        <end position="460"/>
    </location>
</feature>
<feature type="topological domain" description="Extracellular" evidence="2">
    <location>
        <begin position="461"/>
        <end position="494"/>
    </location>
</feature>
<feature type="transmembrane region" description="Helical" evidence="2">
    <location>
        <begin position="495"/>
        <end position="515"/>
    </location>
</feature>
<feature type="topological domain" description="Cytoplasmic" evidence="2">
    <location>
        <begin position="516"/>
        <end position="623"/>
    </location>
</feature>
<feature type="domain" description="FZ">
    <location>
        <begin position="25"/>
        <end position="163"/>
    </location>
</feature>
<feature type="region of interest" description="Disordered" evidence="3">
    <location>
        <begin position="552"/>
        <end position="590"/>
    </location>
</feature>
<feature type="compositionally biased region" description="Low complexity" evidence="3">
    <location>
        <begin position="555"/>
        <end position="580"/>
    </location>
</feature>
<feature type="glycosylation site" description="N-linked (GlcNAc...) asparagine" evidence="2">
    <location>
        <position position="57"/>
    </location>
</feature>
<feature type="glycosylation site" description="N-linked (GlcNAc...) asparagine" evidence="2">
    <location>
        <position position="106"/>
    </location>
</feature>
<feature type="glycosylation site" description="N-linked (GlcNAc...) asparagine" evidence="2">
    <location>
        <position position="109"/>
    </location>
</feature>
<feature type="glycosylation site" description="N-linked (GlcNAc...) asparagine" evidence="2">
    <location>
        <position position="154"/>
    </location>
</feature>
<feature type="glycosylation site" description="N-linked (GlcNAc...) asparagine" evidence="2">
    <location>
        <position position="159"/>
    </location>
</feature>
<feature type="glycosylation site" description="N-linked (GlcNAc...) asparagine" evidence="2">
    <location>
        <position position="169"/>
    </location>
</feature>
<feature type="glycosylation site" description="N-linked (GlcNAc...) asparagine" evidence="2">
    <location>
        <position position="199"/>
    </location>
</feature>
<feature type="glycosylation site" description="N-linked (GlcNAc...) asparagine" evidence="2">
    <location>
        <position position="239"/>
    </location>
</feature>
<feature type="glycosylation site" description="N-linked (GlcNAc...) asparagine" evidence="2">
    <location>
        <position position="463"/>
    </location>
</feature>
<feature type="disulfide bond" evidence="1">
    <location>
        <begin position="30"/>
        <end position="100"/>
    </location>
</feature>
<feature type="disulfide bond" evidence="1">
    <location>
        <begin position="42"/>
        <end position="93"/>
    </location>
</feature>